<proteinExistence type="evidence at protein level"/>
<sequence>AYKVTLKTPSGDQTIEVSPDAYILDAAEEAGLDLPYSCRAGACSSCAGKVEAGTIDQSDQSFLDDDQQGRGFVLTCVAYATSDCTISTHQEESLY</sequence>
<protein>
    <recommendedName>
        <fullName>Ferredoxin-2</fullName>
    </recommendedName>
    <alternativeName>
        <fullName>Ferredoxin II</fullName>
    </alternativeName>
</protein>
<reference key="1">
    <citation type="journal article" date="1980" name="Phytochemistry">
        <title>Purification and sequence determination of two ferredoxins from Dunaliella salina.</title>
        <authorList>
            <person name="Hase T."/>
            <person name="Matsubara H."/>
            <person name="Ben-Amotz A."/>
            <person name="Rao K.K."/>
            <person name="Hall D.O."/>
        </authorList>
    </citation>
    <scope>PROTEIN SEQUENCE</scope>
</reference>
<feature type="chain" id="PRO_0000189327" description="Ferredoxin-2">
    <location>
        <begin position="1"/>
        <end position="95"/>
    </location>
</feature>
<feature type="domain" description="2Fe-2S ferredoxin-type" evidence="1">
    <location>
        <begin position="2"/>
        <end position="92"/>
    </location>
</feature>
<feature type="binding site" evidence="1">
    <location>
        <position position="38"/>
    </location>
    <ligand>
        <name>[2Fe-2S] cluster</name>
        <dbReference type="ChEBI" id="CHEBI:190135"/>
    </ligand>
</feature>
<feature type="binding site" evidence="1">
    <location>
        <position position="43"/>
    </location>
    <ligand>
        <name>[2Fe-2S] cluster</name>
        <dbReference type="ChEBI" id="CHEBI:190135"/>
    </ligand>
</feature>
<feature type="binding site" evidence="1">
    <location>
        <position position="46"/>
    </location>
    <ligand>
        <name>[2Fe-2S] cluster</name>
        <dbReference type="ChEBI" id="CHEBI:190135"/>
    </ligand>
</feature>
<feature type="binding site" evidence="1">
    <location>
        <position position="76"/>
    </location>
    <ligand>
        <name>[2Fe-2S] cluster</name>
        <dbReference type="ChEBI" id="CHEBI:190135"/>
    </ligand>
</feature>
<dbReference type="PIR" id="A00244">
    <property type="entry name" value="FEDH2"/>
</dbReference>
<dbReference type="SMR" id="P00240"/>
<dbReference type="GO" id="GO:0009507">
    <property type="term" value="C:chloroplast"/>
    <property type="evidence" value="ECO:0007669"/>
    <property type="project" value="UniProtKB-SubCell"/>
</dbReference>
<dbReference type="GO" id="GO:0051537">
    <property type="term" value="F:2 iron, 2 sulfur cluster binding"/>
    <property type="evidence" value="ECO:0007669"/>
    <property type="project" value="UniProtKB-KW"/>
</dbReference>
<dbReference type="GO" id="GO:0009055">
    <property type="term" value="F:electron transfer activity"/>
    <property type="evidence" value="ECO:0007669"/>
    <property type="project" value="InterPro"/>
</dbReference>
<dbReference type="GO" id="GO:0046872">
    <property type="term" value="F:metal ion binding"/>
    <property type="evidence" value="ECO:0007669"/>
    <property type="project" value="UniProtKB-KW"/>
</dbReference>
<dbReference type="GO" id="GO:0022900">
    <property type="term" value="P:electron transport chain"/>
    <property type="evidence" value="ECO:0007669"/>
    <property type="project" value="InterPro"/>
</dbReference>
<dbReference type="CDD" id="cd00207">
    <property type="entry name" value="fer2"/>
    <property type="match status" value="1"/>
</dbReference>
<dbReference type="FunFam" id="3.10.20.30:FF:000014">
    <property type="entry name" value="Ferredoxin"/>
    <property type="match status" value="1"/>
</dbReference>
<dbReference type="Gene3D" id="3.10.20.30">
    <property type="match status" value="1"/>
</dbReference>
<dbReference type="InterPro" id="IPR036010">
    <property type="entry name" value="2Fe-2S_ferredoxin-like_sf"/>
</dbReference>
<dbReference type="InterPro" id="IPR001041">
    <property type="entry name" value="2Fe-2S_ferredoxin-type"/>
</dbReference>
<dbReference type="InterPro" id="IPR006058">
    <property type="entry name" value="2Fe2S_fd_BS"/>
</dbReference>
<dbReference type="InterPro" id="IPR012675">
    <property type="entry name" value="Beta-grasp_dom_sf"/>
</dbReference>
<dbReference type="InterPro" id="IPR010241">
    <property type="entry name" value="Fd_pln"/>
</dbReference>
<dbReference type="NCBIfam" id="TIGR02008">
    <property type="entry name" value="fdx_plant"/>
    <property type="match status" value="1"/>
</dbReference>
<dbReference type="PANTHER" id="PTHR43112">
    <property type="entry name" value="FERREDOXIN"/>
    <property type="match status" value="1"/>
</dbReference>
<dbReference type="PANTHER" id="PTHR43112:SF3">
    <property type="entry name" value="FERREDOXIN-2, CHLOROPLASTIC"/>
    <property type="match status" value="1"/>
</dbReference>
<dbReference type="Pfam" id="PF00111">
    <property type="entry name" value="Fer2"/>
    <property type="match status" value="1"/>
</dbReference>
<dbReference type="SUPFAM" id="SSF54292">
    <property type="entry name" value="2Fe-2S ferredoxin-like"/>
    <property type="match status" value="1"/>
</dbReference>
<dbReference type="PROSITE" id="PS00197">
    <property type="entry name" value="2FE2S_FER_1"/>
    <property type="match status" value="1"/>
</dbReference>
<dbReference type="PROSITE" id="PS51085">
    <property type="entry name" value="2FE2S_FER_2"/>
    <property type="match status" value="1"/>
</dbReference>
<comment type="function">
    <text>Ferredoxins are iron-sulfur proteins that transfer electrons in a wide variety of metabolic reactions.</text>
</comment>
<comment type="cofactor">
    <cofactor>
        <name>[2Fe-2S] cluster</name>
        <dbReference type="ChEBI" id="CHEBI:190135"/>
    </cofactor>
    <text>Binds 1 [2Fe-2S] cluster.</text>
</comment>
<comment type="subcellular location">
    <subcellularLocation>
        <location>Plastid</location>
        <location>Chloroplast</location>
    </subcellularLocation>
</comment>
<comment type="similarity">
    <text evidence="2">Belongs to the 2Fe2S plant-type ferredoxin family.</text>
</comment>
<name>FER2_DUNSA</name>
<organism>
    <name type="scientific">Dunaliella salina</name>
    <name type="common">Green alga</name>
    <name type="synonym">Protococcus salinus</name>
    <dbReference type="NCBI Taxonomy" id="3046"/>
    <lineage>
        <taxon>Eukaryota</taxon>
        <taxon>Viridiplantae</taxon>
        <taxon>Chlorophyta</taxon>
        <taxon>core chlorophytes</taxon>
        <taxon>Chlorophyceae</taxon>
        <taxon>CS clade</taxon>
        <taxon>Chlamydomonadales</taxon>
        <taxon>Dunaliellaceae</taxon>
        <taxon>Dunaliella</taxon>
    </lineage>
</organism>
<keyword id="KW-0001">2Fe-2S</keyword>
<keyword id="KW-0150">Chloroplast</keyword>
<keyword id="KW-0903">Direct protein sequencing</keyword>
<keyword id="KW-0249">Electron transport</keyword>
<keyword id="KW-0408">Iron</keyword>
<keyword id="KW-0411">Iron-sulfur</keyword>
<keyword id="KW-0479">Metal-binding</keyword>
<keyword id="KW-0934">Plastid</keyword>
<keyword id="KW-0813">Transport</keyword>
<accession>P00240</accession>
<evidence type="ECO:0000255" key="1">
    <source>
        <dbReference type="PROSITE-ProRule" id="PRU00465"/>
    </source>
</evidence>
<evidence type="ECO:0000305" key="2"/>